<name>NPC1_PIG</name>
<accession>P56941</accession>
<sequence length="1277" mass="141963">MSARGPAFGLLLLLLCPVQVFSQSCVWYGECGIASGDKRYNCRYSGPPKPLPEDGYDLVQELCPGFFFGNVSLCCDVQQLRTLKDNLQLPLQFLSRCPSCFYNLMNLFCELTCSPRQSQFLNVTATEDYVDPVTNQTKTNVKELEYYVGETFANAMYNACRDVEAPSSNEKALGLLCGREAQACNATNWIEYMFNKDNGQAPFTITPIFSDLPTHGMEPMNNATKGCDESVDEVTGPCSCQDCSIVCGPKPQPPPPPVPWRILGLDAMYVIMWSSYMAFLIVFFGAFFAVWCYRKRYFVSEYTPIDGNIAFSVNSSDKGQAFCCDPLGAAFERGLRRLFAQWGAFCVRHPGCVVFFSLAFIVACSSGLVFIRVTTDPVDLWSAPGSQARREKEYFDTHFGPFFRMEQLIIRATNNQSHIYHPYPAGADVPFGPPLSRDILHQVLDLQTAIENITASYNNETVTLQDICLAPLSPYNKNCTILSVLNYFQNSHSVLDHQVGDFFFVYADYHTHFLYCVRAPASLNDASLLHDPCLGTFGGPVFPWLVLGGYDDQNYNNATALVITFPVNNYYNDTEKLQRAQAWESEFINFVKNYKNPNLTISFMAERSIEDELNRESNSDLFTILISYAIMFLYISIALGHIKSCSRLLVDSKISLGIAGILIVLSSVACSLGIFSYIGVPLTLIVIEVIPFLVLAVGVDNIFILVQTYQRDERLQGETLDQQLGRVLGEVAPSMFLSSFSETVAFFLGGLSVVPAVHTFSLFAGMAVLIDFLLQITCFVSLLGLDIKRQEKNRLDVVCCVQGAEDGAGVQASESCLFRFFKNSYAPLLLKDWMRPIVIAVFVGVLSFSIAVLNKVEIGLDQSLSMPDDSYVMDYFQSLSRYLHAGPPVYFVVEEGHNYTSLKGQNMVCGGLGCNNDSLVQQIFTAAQLDNYTRIGFAPSSWIDDYFDWIKPQSSCCRVYNSTDQFCNASVVDPTCIRCRPLTSEGKQRPQGEDFMRFLPMFLSDNPNPKCGKGGHAAYSSAVNILGNGSGVGATYFMTYHTVLQASADFIDAMQKARLIASNITRTMGLEASSYRVFPYSVFYVFYEQYLTVIDDTIFNLGVSLGAIFLVTVVLMGCELWATVIMCVTIAMILVNMFGVMWLWGISLNAVSLVNLVMSCGISVEFCSHITRAFTLSTKGSRVDRAEEALAHMGSSVFSGITLTKFGGIVVLAFAKSQIFQIFYFRMYLAIVLLGATHGLIFLPVLLSYIGPSINKAKSLATQERYKGTEREQLLNF</sequence>
<proteinExistence type="evidence at transcript level"/>
<protein>
    <recommendedName>
        <fullName evidence="2">NPC intracellular cholesterol transporter 1</fullName>
    </recommendedName>
    <alternativeName>
        <fullName evidence="6">Niemann-Pick C1 protein</fullName>
    </alternativeName>
</protein>
<keyword id="KW-0153">Cholesterol metabolism</keyword>
<keyword id="KW-1015">Disulfide bond</keyword>
<keyword id="KW-0967">Endosome</keyword>
<keyword id="KW-0325">Glycoprotein</keyword>
<keyword id="KW-0443">Lipid metabolism</keyword>
<keyword id="KW-0445">Lipid transport</keyword>
<keyword id="KW-0458">Lysosome</keyword>
<keyword id="KW-0472">Membrane</keyword>
<keyword id="KW-1185">Reference proteome</keyword>
<keyword id="KW-0732">Signal</keyword>
<keyword id="KW-0753">Steroid metabolism</keyword>
<keyword id="KW-1207">Sterol metabolism</keyword>
<keyword id="KW-0812">Transmembrane</keyword>
<keyword id="KW-1133">Transmembrane helix</keyword>
<keyword id="KW-0813">Transport</keyword>
<reference key="1">
    <citation type="journal article" date="2002" name="Endocrinology">
        <title>Porcine Niemann Pick-C1 protein is expressed in steroidogenic tissues and modulated by cAMP.</title>
        <authorList>
            <person name="Gevry N."/>
            <person name="Lacroix D."/>
            <person name="Song J.H."/>
            <person name="Pescador N."/>
            <person name="Dobias M."/>
            <person name="Murphy B.D."/>
        </authorList>
    </citation>
    <scope>NUCLEOTIDE SEQUENCE [MRNA]</scope>
    <scope>TISSUE SPECIFICITY</scope>
    <scope>SUBCELLULAR LOCATION</scope>
</reference>
<evidence type="ECO:0000250" key="1"/>
<evidence type="ECO:0000250" key="2">
    <source>
        <dbReference type="UniProtKB" id="O15118"/>
    </source>
</evidence>
<evidence type="ECO:0000255" key="3"/>
<evidence type="ECO:0000255" key="4">
    <source>
        <dbReference type="PROSITE-ProRule" id="PRU00199"/>
    </source>
</evidence>
<evidence type="ECO:0000269" key="5">
    <source>
    </source>
</evidence>
<evidence type="ECO:0000303" key="6">
    <source>
    </source>
</evidence>
<evidence type="ECO:0000305" key="7"/>
<evidence type="ECO:0000305" key="8">
    <source>
    </source>
</evidence>
<gene>
    <name evidence="2" type="primary">NPC1</name>
</gene>
<comment type="function">
    <text evidence="2 7">Intracellular cholesterol transporter which acts in concert with NPC2 and plays an important role in the egress of cholesterol from the endosomal/lysosomal compartment. Unesterified cholesterol that has been released from LDLs in the lumen of the late endosomes/lysosomes is transferred by NPC2 to the cholesterol-binding pocket in the N-terminal domain of NPC1. Cholesterol binds to NPC1 with the hydroxyl group buried in the binding pocket. Binds oxysterol with higher affinity than cholesterol (By similarity). May play a role in vesicular trafficking in glia, a process that may be crucial for maintaining the structural and functional integrity of nerve terminals (Probable). Inhibits cholesterol-mediated mTORC1 activation throught its interaction with SLC38A9 (By similarity).</text>
</comment>
<comment type="catalytic activity">
    <reaction evidence="2">
        <text>cholesterol(in) = cholesterol(out)</text>
        <dbReference type="Rhea" id="RHEA:39747"/>
        <dbReference type="ChEBI" id="CHEBI:16113"/>
    </reaction>
</comment>
<comment type="subunit">
    <text evidence="2">Interacts (via the second lumenal domain) with NPC2. Interacts with TMEM97; the interaction may decrease NPC1 availability to the cell. Interacts with TIM1. Interacts with SLC38A9; this interaction inhibits cholesterol-mediated mTORC1 activation via its sterol transport activity (By similarity).</text>
</comment>
<comment type="subcellular location">
    <subcellularLocation>
        <location evidence="8">Late endosome membrane</location>
        <topology evidence="2">Multi-pass membrane protein</topology>
    </subcellularLocation>
    <subcellularLocation>
        <location evidence="8">Lysosome membrane</location>
        <topology evidence="2">Multi-pass membrane protein</topology>
    </subcellularLocation>
</comment>
<comment type="tissue specificity">
    <text evidence="5">Detected in corpus luteum, granulosa cells and adrenal gland.</text>
</comment>
<comment type="domain">
    <text evidence="2">A cysteine-rich N-terminal domain and a C-terminal domain containing a di-leucine motif necessary for lysosomal targeting are critical for mobilization of cholesterol from lysosomes.</text>
</comment>
<comment type="PTM">
    <text evidence="2">N-glycosylated.</text>
</comment>
<comment type="similarity">
    <text evidence="7">Belongs to the patched family.</text>
</comment>
<organism>
    <name type="scientific">Sus scrofa</name>
    <name type="common">Pig</name>
    <dbReference type="NCBI Taxonomy" id="9823"/>
    <lineage>
        <taxon>Eukaryota</taxon>
        <taxon>Metazoa</taxon>
        <taxon>Chordata</taxon>
        <taxon>Craniata</taxon>
        <taxon>Vertebrata</taxon>
        <taxon>Euteleostomi</taxon>
        <taxon>Mammalia</taxon>
        <taxon>Eutheria</taxon>
        <taxon>Laurasiatheria</taxon>
        <taxon>Artiodactyla</taxon>
        <taxon>Suina</taxon>
        <taxon>Suidae</taxon>
        <taxon>Sus</taxon>
    </lineage>
</organism>
<feature type="signal peptide" evidence="3">
    <location>
        <begin position="1"/>
        <end position="22"/>
    </location>
</feature>
<feature type="chain" id="PRO_0000023263" description="NPC intracellular cholesterol transporter 1">
    <location>
        <begin position="23"/>
        <end position="1277"/>
    </location>
</feature>
<feature type="topological domain" description="Lumenal" evidence="3">
    <location>
        <begin position="23"/>
        <end position="269"/>
    </location>
</feature>
<feature type="transmembrane region" description="Helical" evidence="3">
    <location>
        <begin position="270"/>
        <end position="290"/>
    </location>
</feature>
<feature type="topological domain" description="Cytoplasmic" evidence="3">
    <location>
        <begin position="291"/>
        <end position="350"/>
    </location>
</feature>
<feature type="transmembrane region" description="Helical" evidence="3">
    <location>
        <begin position="351"/>
        <end position="371"/>
    </location>
</feature>
<feature type="topological domain" description="Lumenal" evidence="3">
    <location>
        <begin position="372"/>
        <end position="621"/>
    </location>
</feature>
<feature type="transmembrane region" description="Helical" evidence="3">
    <location>
        <begin position="622"/>
        <end position="642"/>
    </location>
</feature>
<feature type="topological domain" description="Cytoplasmic" evidence="3">
    <location>
        <begin position="643"/>
        <end position="653"/>
    </location>
</feature>
<feature type="transmembrane region" description="Helical" evidence="3">
    <location>
        <begin position="654"/>
        <end position="674"/>
    </location>
</feature>
<feature type="topological domain" description="Lumenal" evidence="3">
    <location>
        <begin position="675"/>
        <end position="677"/>
    </location>
</feature>
<feature type="transmembrane region" description="Helical" evidence="3">
    <location>
        <begin position="678"/>
        <end position="698"/>
    </location>
</feature>
<feature type="topological domain" description="Cytoplasmic" evidence="3">
    <location>
        <begin position="699"/>
        <end position="734"/>
    </location>
</feature>
<feature type="transmembrane region" description="Helical" evidence="3">
    <location>
        <begin position="735"/>
        <end position="755"/>
    </location>
</feature>
<feature type="topological domain" description="Lumenal" evidence="3">
    <location>
        <begin position="756"/>
        <end position="759"/>
    </location>
</feature>
<feature type="transmembrane region" description="Helical" evidence="3">
    <location>
        <begin position="760"/>
        <end position="780"/>
    </location>
</feature>
<feature type="topological domain" description="Cytoplasmic" evidence="3">
    <location>
        <begin position="781"/>
        <end position="832"/>
    </location>
</feature>
<feature type="transmembrane region" description="Helical" evidence="3">
    <location>
        <begin position="833"/>
        <end position="853"/>
    </location>
</feature>
<feature type="topological domain" description="Lumenal" evidence="3">
    <location>
        <begin position="854"/>
        <end position="1097"/>
    </location>
</feature>
<feature type="transmembrane region" description="Helical" evidence="3">
    <location>
        <begin position="1098"/>
        <end position="1118"/>
    </location>
</feature>
<feature type="topological domain" description="Cytoplasmic" evidence="3">
    <location>
        <begin position="1119"/>
        <end position="1123"/>
    </location>
</feature>
<feature type="transmembrane region" description="Helical" evidence="3">
    <location>
        <begin position="1124"/>
        <end position="1144"/>
    </location>
</feature>
<feature type="topological domain" description="Lumenal" evidence="3">
    <location>
        <position position="1145"/>
    </location>
</feature>
<feature type="transmembrane region" description="Helical" evidence="3">
    <location>
        <begin position="1146"/>
        <end position="1166"/>
    </location>
</feature>
<feature type="topological domain" description="Cytoplasmic" evidence="3">
    <location>
        <begin position="1167"/>
        <end position="1194"/>
    </location>
</feature>
<feature type="transmembrane region" description="Helical" evidence="3">
    <location>
        <begin position="1195"/>
        <end position="1215"/>
    </location>
</feature>
<feature type="topological domain" description="Lumenal" evidence="3">
    <location>
        <begin position="1216"/>
        <end position="1226"/>
    </location>
</feature>
<feature type="transmembrane region" description="Helical" evidence="3">
    <location>
        <begin position="1227"/>
        <end position="1247"/>
    </location>
</feature>
<feature type="topological domain" description="Cytoplasmic" evidence="3">
    <location>
        <begin position="1248"/>
        <end position="1277"/>
    </location>
</feature>
<feature type="domain" description="SSD" evidence="4">
    <location>
        <begin position="620"/>
        <end position="785"/>
    </location>
</feature>
<feature type="region of interest" description="Important for cholesterol binding and cholesterol transfer from NPC1 to liposomes" evidence="1">
    <location>
        <begin position="175"/>
        <end position="205"/>
    </location>
</feature>
<feature type="region of interest" description="Required for location in lysosomes" evidence="2">
    <location>
        <begin position="1274"/>
        <end position="1277"/>
    </location>
</feature>
<feature type="short sequence motif" description="Di-leucine motif">
    <location>
        <begin position="1274"/>
        <end position="1277"/>
    </location>
</feature>
<feature type="binding site" evidence="2">
    <location>
        <position position="41"/>
    </location>
    <ligand>
        <name>cholesterol</name>
        <dbReference type="ChEBI" id="CHEBI:16113"/>
    </ligand>
</feature>
<feature type="binding site" evidence="2">
    <location>
        <position position="79"/>
    </location>
    <ligand>
        <name>cholesterol</name>
        <dbReference type="ChEBI" id="CHEBI:16113"/>
    </ligand>
</feature>
<feature type="site" description="Important for cholesterol binding" evidence="2">
    <location>
        <position position="108"/>
    </location>
</feature>
<feature type="glycosylation site" description="N-linked (GlcNAc...) asparagine" evidence="3">
    <location>
        <position position="70"/>
    </location>
</feature>
<feature type="glycosylation site" description="N-linked (GlcNAc...) asparagine" evidence="3">
    <location>
        <position position="122"/>
    </location>
</feature>
<feature type="glycosylation site" description="N-linked (GlcNAc...) asparagine" evidence="3">
    <location>
        <position position="135"/>
    </location>
</feature>
<feature type="glycosylation site" description="N-linked (GlcNAc...) asparagine" evidence="3">
    <location>
        <position position="185"/>
    </location>
</feature>
<feature type="glycosylation site" description="N-linked (GlcNAc...) asparagine" evidence="3">
    <location>
        <position position="222"/>
    </location>
</feature>
<feature type="glycosylation site" description="N-linked (GlcNAc...) asparagine" evidence="3">
    <location>
        <position position="415"/>
    </location>
</feature>
<feature type="glycosylation site" description="N-linked (GlcNAc...) asparagine" evidence="3">
    <location>
        <position position="452"/>
    </location>
</feature>
<feature type="glycosylation site" description="N-linked (GlcNAc...) asparagine" evidence="3">
    <location>
        <position position="459"/>
    </location>
</feature>
<feature type="glycosylation site" description="N-linked (GlcNAc...) asparagine" evidence="3">
    <location>
        <position position="478"/>
    </location>
</feature>
<feature type="glycosylation site" description="N-linked (GlcNAc...) asparagine" evidence="3">
    <location>
        <position position="898"/>
    </location>
</feature>
<feature type="glycosylation site" description="N-linked (GlcNAc...) asparagine" evidence="3">
    <location>
        <position position="916"/>
    </location>
</feature>
<feature type="glycosylation site" description="N-linked (GlcNAc...) asparagine" evidence="3">
    <location>
        <position position="931"/>
    </location>
</feature>
<feature type="glycosylation site" description="N-linked (GlcNAc...) asparagine" evidence="3">
    <location>
        <position position="961"/>
    </location>
</feature>
<feature type="glycosylation site" description="N-linked (GlcNAc...) asparagine" evidence="3">
    <location>
        <position position="968"/>
    </location>
</feature>
<feature type="glycosylation site" description="N-linked (GlcNAc...) asparagine" evidence="3">
    <location>
        <position position="1028"/>
    </location>
</feature>
<feature type="glycosylation site" description="N-linked (GlcNAc...) asparagine" evidence="3">
    <location>
        <position position="1063"/>
    </location>
</feature>
<feature type="disulfide bond" evidence="2">
    <location>
        <begin position="25"/>
        <end position="74"/>
    </location>
</feature>
<feature type="disulfide bond" evidence="2">
    <location>
        <begin position="31"/>
        <end position="42"/>
    </location>
</feature>
<feature type="disulfide bond" evidence="2">
    <location>
        <begin position="63"/>
        <end position="109"/>
    </location>
</feature>
<feature type="disulfide bond" evidence="2">
    <location>
        <begin position="75"/>
        <end position="113"/>
    </location>
</feature>
<feature type="disulfide bond" evidence="2">
    <location>
        <begin position="97"/>
        <end position="238"/>
    </location>
</feature>
<feature type="disulfide bond" evidence="2">
    <location>
        <begin position="100"/>
        <end position="160"/>
    </location>
</feature>
<feature type="disulfide bond" evidence="2">
    <location>
        <begin position="177"/>
        <end position="184"/>
    </location>
</feature>
<feature type="disulfide bond" evidence="2">
    <location>
        <begin position="227"/>
        <end position="243"/>
    </location>
</feature>
<feature type="disulfide bond" evidence="2">
    <location>
        <begin position="240"/>
        <end position="247"/>
    </location>
</feature>
<feature type="disulfide bond" evidence="2">
    <location>
        <begin position="468"/>
        <end position="479"/>
    </location>
</feature>
<feature type="disulfide bond" evidence="2">
    <location>
        <begin position="516"/>
        <end position="533"/>
    </location>
</feature>
<feature type="disulfide bond" evidence="2">
    <location>
        <begin position="909"/>
        <end position="914"/>
    </location>
</feature>
<feature type="disulfide bond" evidence="2">
    <location>
        <begin position="956"/>
        <end position="1011"/>
    </location>
</feature>
<feature type="disulfide bond" evidence="2">
    <location>
        <begin position="957"/>
        <end position="979"/>
    </location>
</feature>
<feature type="disulfide bond" evidence="2">
    <location>
        <begin position="967"/>
        <end position="976"/>
    </location>
</feature>
<dbReference type="EMBL" id="AF169635">
    <property type="protein sequence ID" value="AAD47090.1"/>
    <property type="molecule type" value="mRNA"/>
</dbReference>
<dbReference type="RefSeq" id="NP_999487.1">
    <property type="nucleotide sequence ID" value="NM_214322.1"/>
</dbReference>
<dbReference type="SMR" id="P56941"/>
<dbReference type="FunCoup" id="P56941">
    <property type="interactions" value="1304"/>
</dbReference>
<dbReference type="STRING" id="9823.ENSSSCP00000074577"/>
<dbReference type="GlyCosmos" id="P56941">
    <property type="glycosylation" value="16 sites, No reported glycans"/>
</dbReference>
<dbReference type="GlyGen" id="P56941">
    <property type="glycosylation" value="16 sites"/>
</dbReference>
<dbReference type="PaxDb" id="9823-ENSSSCP00000004014"/>
<dbReference type="PeptideAtlas" id="P56941"/>
<dbReference type="GeneID" id="397591"/>
<dbReference type="KEGG" id="ssc:397591"/>
<dbReference type="CTD" id="4864"/>
<dbReference type="eggNOG" id="KOG1933">
    <property type="taxonomic scope" value="Eukaryota"/>
</dbReference>
<dbReference type="InParanoid" id="P56941"/>
<dbReference type="OrthoDB" id="6510177at2759"/>
<dbReference type="Proteomes" id="UP000008227">
    <property type="component" value="Unplaced"/>
</dbReference>
<dbReference type="Proteomes" id="UP000314985">
    <property type="component" value="Unplaced"/>
</dbReference>
<dbReference type="Proteomes" id="UP000694570">
    <property type="component" value="Unplaced"/>
</dbReference>
<dbReference type="Proteomes" id="UP000694571">
    <property type="component" value="Unplaced"/>
</dbReference>
<dbReference type="Proteomes" id="UP000694720">
    <property type="component" value="Unplaced"/>
</dbReference>
<dbReference type="Proteomes" id="UP000694722">
    <property type="component" value="Unplaced"/>
</dbReference>
<dbReference type="Proteomes" id="UP000694723">
    <property type="component" value="Unplaced"/>
</dbReference>
<dbReference type="Proteomes" id="UP000694724">
    <property type="component" value="Unplaced"/>
</dbReference>
<dbReference type="Proteomes" id="UP000694725">
    <property type="component" value="Unplaced"/>
</dbReference>
<dbReference type="Proteomes" id="UP000694726">
    <property type="component" value="Unplaced"/>
</dbReference>
<dbReference type="Proteomes" id="UP000694727">
    <property type="component" value="Unplaced"/>
</dbReference>
<dbReference type="Proteomes" id="UP000694728">
    <property type="component" value="Unplaced"/>
</dbReference>
<dbReference type="GO" id="GO:0005783">
    <property type="term" value="C:endoplasmic reticulum"/>
    <property type="evidence" value="ECO:0000250"/>
    <property type="project" value="UniProtKB"/>
</dbReference>
<dbReference type="GO" id="GO:0005576">
    <property type="term" value="C:extracellular region"/>
    <property type="evidence" value="ECO:0000250"/>
    <property type="project" value="UniProtKB"/>
</dbReference>
<dbReference type="GO" id="GO:0031902">
    <property type="term" value="C:late endosome membrane"/>
    <property type="evidence" value="ECO:0000250"/>
    <property type="project" value="UniProtKB"/>
</dbReference>
<dbReference type="GO" id="GO:0005765">
    <property type="term" value="C:lysosomal membrane"/>
    <property type="evidence" value="ECO:0000250"/>
    <property type="project" value="UniProtKB"/>
</dbReference>
<dbReference type="GO" id="GO:0005764">
    <property type="term" value="C:lysosome"/>
    <property type="evidence" value="ECO:0000250"/>
    <property type="project" value="UniProtKB"/>
</dbReference>
<dbReference type="GO" id="GO:0005635">
    <property type="term" value="C:nuclear envelope"/>
    <property type="evidence" value="ECO:0000250"/>
    <property type="project" value="UniProtKB"/>
</dbReference>
<dbReference type="GO" id="GO:0048471">
    <property type="term" value="C:perinuclear region of cytoplasm"/>
    <property type="evidence" value="ECO:0000250"/>
    <property type="project" value="UniProtKB"/>
</dbReference>
<dbReference type="GO" id="GO:0005886">
    <property type="term" value="C:plasma membrane"/>
    <property type="evidence" value="ECO:0000250"/>
    <property type="project" value="UniProtKB"/>
</dbReference>
<dbReference type="GO" id="GO:0015485">
    <property type="term" value="F:cholesterol binding"/>
    <property type="evidence" value="ECO:0000250"/>
    <property type="project" value="UniProtKB"/>
</dbReference>
<dbReference type="GO" id="GO:0005319">
    <property type="term" value="F:lipid transporter activity"/>
    <property type="evidence" value="ECO:0007669"/>
    <property type="project" value="InterPro"/>
</dbReference>
<dbReference type="GO" id="GO:0008206">
    <property type="term" value="P:bile acid metabolic process"/>
    <property type="evidence" value="ECO:0000250"/>
    <property type="project" value="UniProtKB"/>
</dbReference>
<dbReference type="GO" id="GO:0042632">
    <property type="term" value="P:cholesterol homeostasis"/>
    <property type="evidence" value="ECO:0000250"/>
    <property type="project" value="UniProtKB"/>
</dbReference>
<dbReference type="GO" id="GO:0008203">
    <property type="term" value="P:cholesterol metabolic process"/>
    <property type="evidence" value="ECO:0007669"/>
    <property type="project" value="UniProtKB-KW"/>
</dbReference>
<dbReference type="GO" id="GO:0030301">
    <property type="term" value="P:cholesterol transport"/>
    <property type="evidence" value="ECO:0000250"/>
    <property type="project" value="UniProtKB"/>
</dbReference>
<dbReference type="GO" id="GO:0030299">
    <property type="term" value="P:intestinal cholesterol absorption"/>
    <property type="evidence" value="ECO:0000318"/>
    <property type="project" value="GO_Central"/>
</dbReference>
<dbReference type="GO" id="GO:0032367">
    <property type="term" value="P:intracellular cholesterol transport"/>
    <property type="evidence" value="ECO:0000250"/>
    <property type="project" value="UniProtKB"/>
</dbReference>
<dbReference type="GO" id="GO:0032365">
    <property type="term" value="P:intracellular lipid transport"/>
    <property type="evidence" value="ECO:0000250"/>
    <property type="project" value="UniProtKB"/>
</dbReference>
<dbReference type="GO" id="GO:0007041">
    <property type="term" value="P:lysosomal transport"/>
    <property type="evidence" value="ECO:0000250"/>
    <property type="project" value="UniProtKB"/>
</dbReference>
<dbReference type="GO" id="GO:1904262">
    <property type="term" value="P:negative regulation of TORC1 signaling"/>
    <property type="evidence" value="ECO:0000250"/>
    <property type="project" value="UniProtKB"/>
</dbReference>
<dbReference type="GO" id="GO:0006486">
    <property type="term" value="P:protein glycosylation"/>
    <property type="evidence" value="ECO:0000250"/>
    <property type="project" value="UniProtKB"/>
</dbReference>
<dbReference type="GO" id="GO:0015918">
    <property type="term" value="P:sterol transport"/>
    <property type="evidence" value="ECO:0000318"/>
    <property type="project" value="GO_Central"/>
</dbReference>
<dbReference type="FunFam" id="1.20.1640.10:FF:000008">
    <property type="entry name" value="NPC intracellular cholesterol transporter 1"/>
    <property type="match status" value="1"/>
</dbReference>
<dbReference type="FunFam" id="1.20.1640.10:FF:000010">
    <property type="entry name" value="NPC intracellular cholesterol transporter 1"/>
    <property type="match status" value="1"/>
</dbReference>
<dbReference type="Gene3D" id="1.20.1640.10">
    <property type="entry name" value="Multidrug efflux transporter AcrB transmembrane domain"/>
    <property type="match status" value="2"/>
</dbReference>
<dbReference type="InterPro" id="IPR053958">
    <property type="entry name" value="HMGCR/SNAP/NPC1-like_SSD"/>
</dbReference>
<dbReference type="InterPro" id="IPR004765">
    <property type="entry name" value="NPC1-like"/>
</dbReference>
<dbReference type="InterPro" id="IPR053956">
    <property type="entry name" value="NPC1_MLD"/>
</dbReference>
<dbReference type="InterPro" id="IPR032190">
    <property type="entry name" value="NPC1_N"/>
</dbReference>
<dbReference type="InterPro" id="IPR000731">
    <property type="entry name" value="SSD"/>
</dbReference>
<dbReference type="NCBIfam" id="TIGR00917">
    <property type="entry name" value="2A060601"/>
    <property type="match status" value="1"/>
</dbReference>
<dbReference type="PANTHER" id="PTHR45727">
    <property type="entry name" value="NPC INTRACELLULAR CHOLESTEROL TRANSPORTER 1"/>
    <property type="match status" value="1"/>
</dbReference>
<dbReference type="PANTHER" id="PTHR45727:SF2">
    <property type="entry name" value="NPC INTRACELLULAR CHOLESTEROL TRANSPORTER 1"/>
    <property type="match status" value="1"/>
</dbReference>
<dbReference type="Pfam" id="PF22314">
    <property type="entry name" value="NPC1_MLD"/>
    <property type="match status" value="1"/>
</dbReference>
<dbReference type="Pfam" id="PF16414">
    <property type="entry name" value="NPC1_N"/>
    <property type="match status" value="1"/>
</dbReference>
<dbReference type="Pfam" id="PF12349">
    <property type="entry name" value="Sterol-sensing"/>
    <property type="match status" value="1"/>
</dbReference>
<dbReference type="SUPFAM" id="SSF82866">
    <property type="entry name" value="Multidrug efflux transporter AcrB transmembrane domain"/>
    <property type="match status" value="2"/>
</dbReference>
<dbReference type="PROSITE" id="PS50156">
    <property type="entry name" value="SSD"/>
    <property type="match status" value="1"/>
</dbReference>